<accession>Q6K1S6</accession>
<protein>
    <recommendedName>
        <fullName evidence="5">Transcription factor MYB30</fullName>
        <shortName evidence="4">OsMYB30</shortName>
    </recommendedName>
</protein>
<gene>
    <name evidence="4" type="primary">MYB30</name>
    <name evidence="7" type="ordered locus">Os02g0624300</name>
    <name evidence="5" type="ordered locus">LOC_Os02g41510</name>
    <name evidence="6" type="ORF">B1215B07.15</name>
    <name evidence="8" type="ORF">OsJ_07582</name>
</gene>
<keyword id="KW-0238">DNA-binding</keyword>
<keyword id="KW-0539">Nucleus</keyword>
<keyword id="KW-1185">Reference proteome</keyword>
<keyword id="KW-0677">Repeat</keyword>
<keyword id="KW-0346">Stress response</keyword>
<keyword id="KW-0804">Transcription</keyword>
<keyword id="KW-0805">Transcription regulation</keyword>
<dbReference type="EMBL" id="AP006523">
    <property type="protein sequence ID" value="BAD23776.1"/>
    <property type="molecule type" value="Genomic_DNA"/>
</dbReference>
<dbReference type="EMBL" id="AP008208">
    <property type="protein sequence ID" value="BAF09388.1"/>
    <property type="molecule type" value="Genomic_DNA"/>
</dbReference>
<dbReference type="EMBL" id="AP014958">
    <property type="protein sequence ID" value="BAS79847.1"/>
    <property type="molecule type" value="Genomic_DNA"/>
</dbReference>
<dbReference type="EMBL" id="CM000139">
    <property type="protein sequence ID" value="EAZ23866.1"/>
    <property type="molecule type" value="Genomic_DNA"/>
</dbReference>
<dbReference type="EMBL" id="AK112056">
    <property type="protein sequence ID" value="BAG99528.1"/>
    <property type="molecule type" value="mRNA"/>
</dbReference>
<dbReference type="SMR" id="Q6K1S6"/>
<dbReference type="FunCoup" id="Q6K1S6">
    <property type="interactions" value="81"/>
</dbReference>
<dbReference type="STRING" id="39947.Q6K1S6"/>
<dbReference type="PaxDb" id="39947-Q6K1S6"/>
<dbReference type="EnsemblPlants" id="Os02t0624300-01">
    <property type="protein sequence ID" value="Os02t0624300-01"/>
    <property type="gene ID" value="Os02g0624300"/>
</dbReference>
<dbReference type="Gramene" id="Os02t0624300-01">
    <property type="protein sequence ID" value="Os02t0624300-01"/>
    <property type="gene ID" value="Os02g0624300"/>
</dbReference>
<dbReference type="KEGG" id="dosa:Os02g0624300"/>
<dbReference type="KEGG" id="osa:4330027"/>
<dbReference type="eggNOG" id="KOG0048">
    <property type="taxonomic scope" value="Eukaryota"/>
</dbReference>
<dbReference type="HOGENOM" id="CLU_028567_6_4_1"/>
<dbReference type="InParanoid" id="Q6K1S6"/>
<dbReference type="OMA" id="MEREDAC"/>
<dbReference type="OrthoDB" id="2143914at2759"/>
<dbReference type="PlantReactome" id="R-OSA-8879007">
    <property type="pathway name" value="Response to cold temperature"/>
</dbReference>
<dbReference type="Proteomes" id="UP000000763">
    <property type="component" value="Chromosome 2"/>
</dbReference>
<dbReference type="Proteomes" id="UP000007752">
    <property type="component" value="Chromosome 2"/>
</dbReference>
<dbReference type="Proteomes" id="UP000059680">
    <property type="component" value="Chromosome 2"/>
</dbReference>
<dbReference type="GO" id="GO:0005634">
    <property type="term" value="C:nucleus"/>
    <property type="evidence" value="ECO:0007669"/>
    <property type="project" value="UniProtKB-SubCell"/>
</dbReference>
<dbReference type="GO" id="GO:0003677">
    <property type="term" value="F:DNA binding"/>
    <property type="evidence" value="ECO:0007669"/>
    <property type="project" value="UniProtKB-KW"/>
</dbReference>
<dbReference type="CDD" id="cd00167">
    <property type="entry name" value="SANT"/>
    <property type="match status" value="2"/>
</dbReference>
<dbReference type="FunFam" id="1.10.10.60:FF:000001">
    <property type="entry name" value="MYB-related transcription factor"/>
    <property type="match status" value="1"/>
</dbReference>
<dbReference type="FunFam" id="1.10.10.60:FF:000316">
    <property type="entry name" value="Transcription factor MYB15"/>
    <property type="match status" value="1"/>
</dbReference>
<dbReference type="Gene3D" id="1.10.10.60">
    <property type="entry name" value="Homeodomain-like"/>
    <property type="match status" value="2"/>
</dbReference>
<dbReference type="InterPro" id="IPR009057">
    <property type="entry name" value="Homeodomain-like_sf"/>
</dbReference>
<dbReference type="InterPro" id="IPR017930">
    <property type="entry name" value="Myb_dom"/>
</dbReference>
<dbReference type="InterPro" id="IPR015495">
    <property type="entry name" value="Myb_TF_plants"/>
</dbReference>
<dbReference type="InterPro" id="IPR001005">
    <property type="entry name" value="SANT/Myb"/>
</dbReference>
<dbReference type="PANTHER" id="PTHR10641">
    <property type="entry name" value="MYB FAMILY TRANSCRIPTION FACTOR"/>
    <property type="match status" value="1"/>
</dbReference>
<dbReference type="PANTHER" id="PTHR10641:SF1341">
    <property type="entry name" value="TRANSCRIPTION FACTOR MYB30"/>
    <property type="match status" value="1"/>
</dbReference>
<dbReference type="Pfam" id="PF00249">
    <property type="entry name" value="Myb_DNA-binding"/>
    <property type="match status" value="2"/>
</dbReference>
<dbReference type="SMART" id="SM00717">
    <property type="entry name" value="SANT"/>
    <property type="match status" value="2"/>
</dbReference>
<dbReference type="SUPFAM" id="SSF46689">
    <property type="entry name" value="Homeodomain-like"/>
    <property type="match status" value="1"/>
</dbReference>
<dbReference type="PROSITE" id="PS51294">
    <property type="entry name" value="HTH_MYB"/>
    <property type="match status" value="2"/>
</dbReference>
<reference key="1">
    <citation type="journal article" date="2005" name="Nature">
        <title>The map-based sequence of the rice genome.</title>
        <authorList>
            <consortium name="International rice genome sequencing project (IRGSP)"/>
        </authorList>
    </citation>
    <scope>NUCLEOTIDE SEQUENCE [LARGE SCALE GENOMIC DNA]</scope>
    <source>
        <strain>cv. Nipponbare</strain>
    </source>
</reference>
<reference key="2">
    <citation type="journal article" date="2008" name="Nucleic Acids Res.">
        <title>The rice annotation project database (RAP-DB): 2008 update.</title>
        <authorList>
            <consortium name="The rice annotation project (RAP)"/>
        </authorList>
    </citation>
    <scope>GENOME REANNOTATION</scope>
    <source>
        <strain>cv. Nipponbare</strain>
    </source>
</reference>
<reference key="3">
    <citation type="journal article" date="2013" name="Rice">
        <title>Improvement of the Oryza sativa Nipponbare reference genome using next generation sequence and optical map data.</title>
        <authorList>
            <person name="Kawahara Y."/>
            <person name="de la Bastide M."/>
            <person name="Hamilton J.P."/>
            <person name="Kanamori H."/>
            <person name="McCombie W.R."/>
            <person name="Ouyang S."/>
            <person name="Schwartz D.C."/>
            <person name="Tanaka T."/>
            <person name="Wu J."/>
            <person name="Zhou S."/>
            <person name="Childs K.L."/>
            <person name="Davidson R.M."/>
            <person name="Lin H."/>
            <person name="Quesada-Ocampo L."/>
            <person name="Vaillancourt B."/>
            <person name="Sakai H."/>
            <person name="Lee S.S."/>
            <person name="Kim J."/>
            <person name="Numa H."/>
            <person name="Itoh T."/>
            <person name="Buell C.R."/>
            <person name="Matsumoto T."/>
        </authorList>
    </citation>
    <scope>GENOME REANNOTATION</scope>
    <source>
        <strain>cv. Nipponbare</strain>
    </source>
</reference>
<reference key="4">
    <citation type="journal article" date="2005" name="PLoS Biol.">
        <title>The genomes of Oryza sativa: a history of duplications.</title>
        <authorList>
            <person name="Yu J."/>
            <person name="Wang J."/>
            <person name="Lin W."/>
            <person name="Li S."/>
            <person name="Li H."/>
            <person name="Zhou J."/>
            <person name="Ni P."/>
            <person name="Dong W."/>
            <person name="Hu S."/>
            <person name="Zeng C."/>
            <person name="Zhang J."/>
            <person name="Zhang Y."/>
            <person name="Li R."/>
            <person name="Xu Z."/>
            <person name="Li S."/>
            <person name="Li X."/>
            <person name="Zheng H."/>
            <person name="Cong L."/>
            <person name="Lin L."/>
            <person name="Yin J."/>
            <person name="Geng J."/>
            <person name="Li G."/>
            <person name="Shi J."/>
            <person name="Liu J."/>
            <person name="Lv H."/>
            <person name="Li J."/>
            <person name="Wang J."/>
            <person name="Deng Y."/>
            <person name="Ran L."/>
            <person name="Shi X."/>
            <person name="Wang X."/>
            <person name="Wu Q."/>
            <person name="Li C."/>
            <person name="Ren X."/>
            <person name="Wang J."/>
            <person name="Wang X."/>
            <person name="Li D."/>
            <person name="Liu D."/>
            <person name="Zhang X."/>
            <person name="Ji Z."/>
            <person name="Zhao W."/>
            <person name="Sun Y."/>
            <person name="Zhang Z."/>
            <person name="Bao J."/>
            <person name="Han Y."/>
            <person name="Dong L."/>
            <person name="Ji J."/>
            <person name="Chen P."/>
            <person name="Wu S."/>
            <person name="Liu J."/>
            <person name="Xiao Y."/>
            <person name="Bu D."/>
            <person name="Tan J."/>
            <person name="Yang L."/>
            <person name="Ye C."/>
            <person name="Zhang J."/>
            <person name="Xu J."/>
            <person name="Zhou Y."/>
            <person name="Yu Y."/>
            <person name="Zhang B."/>
            <person name="Zhuang S."/>
            <person name="Wei H."/>
            <person name="Liu B."/>
            <person name="Lei M."/>
            <person name="Yu H."/>
            <person name="Li Y."/>
            <person name="Xu H."/>
            <person name="Wei S."/>
            <person name="He X."/>
            <person name="Fang L."/>
            <person name="Zhang Z."/>
            <person name="Zhang Y."/>
            <person name="Huang X."/>
            <person name="Su Z."/>
            <person name="Tong W."/>
            <person name="Li J."/>
            <person name="Tong Z."/>
            <person name="Li S."/>
            <person name="Ye J."/>
            <person name="Wang L."/>
            <person name="Fang L."/>
            <person name="Lei T."/>
            <person name="Chen C.-S."/>
            <person name="Chen H.-C."/>
            <person name="Xu Z."/>
            <person name="Li H."/>
            <person name="Huang H."/>
            <person name="Zhang F."/>
            <person name="Xu H."/>
            <person name="Li N."/>
            <person name="Zhao C."/>
            <person name="Li S."/>
            <person name="Dong L."/>
            <person name="Huang Y."/>
            <person name="Li L."/>
            <person name="Xi Y."/>
            <person name="Qi Q."/>
            <person name="Li W."/>
            <person name="Zhang B."/>
            <person name="Hu W."/>
            <person name="Zhang Y."/>
            <person name="Tian X."/>
            <person name="Jiao Y."/>
            <person name="Liang X."/>
            <person name="Jin J."/>
            <person name="Gao L."/>
            <person name="Zheng W."/>
            <person name="Hao B."/>
            <person name="Liu S.-M."/>
            <person name="Wang W."/>
            <person name="Yuan L."/>
            <person name="Cao M."/>
            <person name="McDermott J."/>
            <person name="Samudrala R."/>
            <person name="Wang J."/>
            <person name="Wong G.K.-S."/>
            <person name="Yang H."/>
        </authorList>
    </citation>
    <scope>NUCLEOTIDE SEQUENCE [LARGE SCALE GENOMIC DNA]</scope>
    <source>
        <strain>cv. Nipponbare</strain>
    </source>
</reference>
<reference key="5">
    <citation type="journal article" date="2003" name="Science">
        <title>Collection, mapping, and annotation of over 28,000 cDNA clones from japonica rice.</title>
        <authorList>
            <consortium name="The rice full-length cDNA consortium"/>
        </authorList>
    </citation>
    <scope>NUCLEOTIDE SEQUENCE [LARGE SCALE MRNA]</scope>
    <source>
        <strain>cv. Nipponbare</strain>
    </source>
</reference>
<reference key="6">
    <citation type="journal article" date="2009" name="Plant Physiol.">
        <title>GRASSIUS: a platform for comparative regulatory genomics across the grasses.</title>
        <authorList>
            <person name="Yilmaz A."/>
            <person name="Nishiyama M.Y."/>
            <person name="Fuentes B.G."/>
            <person name="Souza G.M."/>
            <person name="Janies D."/>
            <person name="Gray J."/>
            <person name="Grotewold E."/>
        </authorList>
    </citation>
    <scope>GENE FAMILY</scope>
    <scope>NOMENCLATURE</scope>
    <source>
        <strain>cv. Nipponbare</strain>
    </source>
</reference>
<reference key="7">
    <citation type="journal article" date="2017" name="Plant Physiol.">
        <title>The OsMYB30 transcription factor suppresses cold tolerance by interacting with a JAZ protein and suppressing beta-amylase expression.</title>
        <authorList>
            <person name="Lv Y."/>
            <person name="Yang M."/>
            <person name="Hu D."/>
            <person name="Yang Z."/>
            <person name="Ma S."/>
            <person name="Li X."/>
            <person name="Xiong L."/>
        </authorList>
    </citation>
    <scope>FUNCTION</scope>
    <scope>INTERACTION WITH TIFY11A/JAZ9</scope>
    <scope>SUBCELLULAR LOCATION</scope>
    <scope>INDUCTION</scope>
    <scope>DISRUPTION PHENOTYPE</scope>
    <source>
        <strain>cv. Zhonghua 11</strain>
    </source>
</reference>
<organism>
    <name type="scientific">Oryza sativa subsp. japonica</name>
    <name type="common">Rice</name>
    <dbReference type="NCBI Taxonomy" id="39947"/>
    <lineage>
        <taxon>Eukaryota</taxon>
        <taxon>Viridiplantae</taxon>
        <taxon>Streptophyta</taxon>
        <taxon>Embryophyta</taxon>
        <taxon>Tracheophyta</taxon>
        <taxon>Spermatophyta</taxon>
        <taxon>Magnoliopsida</taxon>
        <taxon>Liliopsida</taxon>
        <taxon>Poales</taxon>
        <taxon>Poaceae</taxon>
        <taxon>BOP clade</taxon>
        <taxon>Oryzoideae</taxon>
        <taxon>Oryzeae</taxon>
        <taxon>Oryzinae</taxon>
        <taxon>Oryza</taxon>
        <taxon>Oryza sativa</taxon>
    </lineage>
</organism>
<feature type="chain" id="PRO_0000440329" description="Transcription factor MYB30">
    <location>
        <begin position="1"/>
        <end position="258"/>
    </location>
</feature>
<feature type="domain" description="HTH myb-type 1" evidence="1">
    <location>
        <begin position="9"/>
        <end position="61"/>
    </location>
</feature>
<feature type="domain" description="HTH myb-type 2" evidence="1">
    <location>
        <begin position="62"/>
        <end position="116"/>
    </location>
</feature>
<feature type="DNA-binding region" description="H-T-H motif" evidence="1">
    <location>
        <begin position="37"/>
        <end position="61"/>
    </location>
</feature>
<feature type="DNA-binding region" description="H-T-H motif" evidence="1">
    <location>
        <begin position="89"/>
        <end position="112"/>
    </location>
</feature>
<feature type="region of interest" description="Disordered" evidence="2">
    <location>
        <begin position="211"/>
        <end position="234"/>
    </location>
</feature>
<name>MYB30_ORYSJ</name>
<comment type="function">
    <text evidence="3">Acts as a negative regulator of cold tolerance. Negatively regulates beta-amylase genes at the transcriptional level in response to cold stress. Suppresses beta-amylase gene expression by interacting with TIFY11A/JAZ9. Maltose produced by beta-amylases has a role in protecting cell membranes under cold stress conditions in rice and may contribute to the cold tolerance as a compatible solute.</text>
</comment>
<comment type="subunit">
    <text evidence="3">Interacts with TIFY11A/JAZ9.</text>
</comment>
<comment type="subcellular location">
    <subcellularLocation>
        <location evidence="1 3">Nucleus</location>
    </subcellularLocation>
</comment>
<comment type="induction">
    <text evidence="3">Induced by cold stress and flooding.</text>
</comment>
<comment type="disruption phenotype">
    <text evidence="3">No visible phenotype under normal growth conditions, but mutant plants exhibit increased tolerance to cold stress.</text>
</comment>
<sequence>MGRAPCCEKMGLKRGPWTAEEDRILVAHIERHGHSNWRALPRQAGLLRCGKSCRLRWINYLRPDIKRGNFTREEEDAIIHLHDLLGNRWSAIAARLPGRTDNEIKNVWHTHLKKRLEPKPSSGREAAAPKRKATKKAAAVAVAIDVPTTVPVSPEQSLSTTTTSAATTEEYSYSMASSADHNTTDSFTSEEEFQIDDSFWSETLAMTVDSTDSGMEMSGGDPLGAGGASPSSSNDDDMDDFWLKLFIQAGGMQNLPQI</sequence>
<proteinExistence type="evidence at protein level"/>
<evidence type="ECO:0000255" key="1">
    <source>
        <dbReference type="PROSITE-ProRule" id="PRU00625"/>
    </source>
</evidence>
<evidence type="ECO:0000256" key="2">
    <source>
        <dbReference type="SAM" id="MobiDB-lite"/>
    </source>
</evidence>
<evidence type="ECO:0000269" key="3">
    <source>
    </source>
</evidence>
<evidence type="ECO:0000303" key="4">
    <source>
    </source>
</evidence>
<evidence type="ECO:0000305" key="5"/>
<evidence type="ECO:0000312" key="6">
    <source>
        <dbReference type="EMBL" id="BAD23776.1"/>
    </source>
</evidence>
<evidence type="ECO:0000312" key="7">
    <source>
        <dbReference type="EMBL" id="BAS79847.1"/>
    </source>
</evidence>
<evidence type="ECO:0000312" key="8">
    <source>
        <dbReference type="EMBL" id="EAZ23866.1"/>
    </source>
</evidence>